<dbReference type="PIR" id="A24749">
    <property type="entry name" value="A24749"/>
</dbReference>
<dbReference type="InParanoid" id="P15506"/>
<dbReference type="Proteomes" id="UP000009136">
    <property type="component" value="Unplaced"/>
</dbReference>
<dbReference type="GO" id="GO:0005576">
    <property type="term" value="C:extracellular region"/>
    <property type="evidence" value="ECO:0007669"/>
    <property type="project" value="UniProtKB-SubCell"/>
</dbReference>
<dbReference type="GO" id="GO:0007218">
    <property type="term" value="P:neuropeptide signaling pathway"/>
    <property type="evidence" value="ECO:0007669"/>
    <property type="project" value="UniProtKB-KW"/>
</dbReference>
<protein>
    <recommendedName>
        <fullName>Morphine-modulating neuropeptide A</fullName>
    </recommendedName>
</protein>
<keyword id="KW-0027">Amidation</keyword>
<keyword id="KW-0903">Direct protein sequencing</keyword>
<keyword id="KW-0527">Neuropeptide</keyword>
<keyword id="KW-1185">Reference proteome</keyword>
<keyword id="KW-0964">Secreted</keyword>
<name>NPMA_BOVIN</name>
<proteinExistence type="evidence at protein level"/>
<evidence type="ECO:0000269" key="1">
    <source>
    </source>
</evidence>
<organism>
    <name type="scientific">Bos taurus</name>
    <name type="common">Bovine</name>
    <dbReference type="NCBI Taxonomy" id="9913"/>
    <lineage>
        <taxon>Eukaryota</taxon>
        <taxon>Metazoa</taxon>
        <taxon>Chordata</taxon>
        <taxon>Craniata</taxon>
        <taxon>Vertebrata</taxon>
        <taxon>Euteleostomi</taxon>
        <taxon>Mammalia</taxon>
        <taxon>Eutheria</taxon>
        <taxon>Laurasiatheria</taxon>
        <taxon>Artiodactyla</taxon>
        <taxon>Ruminantia</taxon>
        <taxon>Pecora</taxon>
        <taxon>Bovidae</taxon>
        <taxon>Bovinae</taxon>
        <taxon>Bos</taxon>
    </lineage>
</organism>
<accession>P15506</accession>
<comment type="function">
    <text>Modulates the action of morphine.</text>
</comment>
<comment type="subcellular location">
    <subcellularLocation>
        <location>Secreted</location>
    </subcellularLocation>
</comment>
<reference key="1">
    <citation type="journal article" date="1985" name="Proc. Natl. Acad. Sci. U.S.A.">
        <title>Isolation, sequencing, synthesis, and pharmacological characterization of two brain neuropeptides that modulate the action of morphine.</title>
        <authorList>
            <person name="Yang H.-Y.T."/>
            <person name="Fratta W."/>
            <person name="Majane E.A."/>
            <person name="Costa E."/>
        </authorList>
    </citation>
    <scope>PROTEIN SEQUENCE</scope>
    <scope>AMIDATION AT PHE-18</scope>
    <scope>SYNTHESIS</scope>
    <source>
        <tissue>Brain</tissue>
    </source>
</reference>
<feature type="peptide" id="PRO_0000044177" description="Morphine-modulating neuropeptide A">
    <location>
        <begin position="1"/>
        <end position="18"/>
    </location>
</feature>
<feature type="modified residue" description="Phenylalanine amide" evidence="1">
    <location>
        <position position="18"/>
    </location>
</feature>
<sequence>AGEGLSSPFWSLAAPQRF</sequence>